<accession>C5D3S0</accession>
<comment type="function">
    <text evidence="1">One of the primary rRNA binding proteins. Required for association of the 30S and 50S subunits to form the 70S ribosome, for tRNA binding and peptide bond formation. It has been suggested to have peptidyltransferase activity; this is somewhat controversial. Makes several contacts with the 16S rRNA in the 70S ribosome.</text>
</comment>
<comment type="subunit">
    <text evidence="1">Part of the 50S ribosomal subunit. Forms a bridge to the 30S subunit in the 70S ribosome.</text>
</comment>
<comment type="similarity">
    <text evidence="1">Belongs to the universal ribosomal protein uL2 family.</text>
</comment>
<keyword id="KW-0687">Ribonucleoprotein</keyword>
<keyword id="KW-0689">Ribosomal protein</keyword>
<keyword id="KW-0694">RNA-binding</keyword>
<keyword id="KW-0699">rRNA-binding</keyword>
<proteinExistence type="inferred from homology"/>
<dbReference type="EMBL" id="CP001638">
    <property type="protein sequence ID" value="ACS23054.1"/>
    <property type="molecule type" value="Genomic_DNA"/>
</dbReference>
<dbReference type="SMR" id="C5D3S0"/>
<dbReference type="STRING" id="471223.GWCH70_0114"/>
<dbReference type="KEGG" id="gwc:GWCH70_0114"/>
<dbReference type="eggNOG" id="COG0090">
    <property type="taxonomic scope" value="Bacteria"/>
</dbReference>
<dbReference type="HOGENOM" id="CLU_036235_2_1_9"/>
<dbReference type="OrthoDB" id="9778722at2"/>
<dbReference type="GO" id="GO:0015934">
    <property type="term" value="C:large ribosomal subunit"/>
    <property type="evidence" value="ECO:0007669"/>
    <property type="project" value="InterPro"/>
</dbReference>
<dbReference type="GO" id="GO:0019843">
    <property type="term" value="F:rRNA binding"/>
    <property type="evidence" value="ECO:0007669"/>
    <property type="project" value="UniProtKB-UniRule"/>
</dbReference>
<dbReference type="GO" id="GO:0003735">
    <property type="term" value="F:structural constituent of ribosome"/>
    <property type="evidence" value="ECO:0007669"/>
    <property type="project" value="InterPro"/>
</dbReference>
<dbReference type="GO" id="GO:0016740">
    <property type="term" value="F:transferase activity"/>
    <property type="evidence" value="ECO:0007669"/>
    <property type="project" value="InterPro"/>
</dbReference>
<dbReference type="GO" id="GO:0002181">
    <property type="term" value="P:cytoplasmic translation"/>
    <property type="evidence" value="ECO:0007669"/>
    <property type="project" value="TreeGrafter"/>
</dbReference>
<dbReference type="FunFam" id="2.30.30.30:FF:000001">
    <property type="entry name" value="50S ribosomal protein L2"/>
    <property type="match status" value="1"/>
</dbReference>
<dbReference type="FunFam" id="2.40.50.140:FF:000003">
    <property type="entry name" value="50S ribosomal protein L2"/>
    <property type="match status" value="1"/>
</dbReference>
<dbReference type="FunFam" id="4.10.950.10:FF:000001">
    <property type="entry name" value="50S ribosomal protein L2"/>
    <property type="match status" value="1"/>
</dbReference>
<dbReference type="Gene3D" id="2.30.30.30">
    <property type="match status" value="1"/>
</dbReference>
<dbReference type="Gene3D" id="2.40.50.140">
    <property type="entry name" value="Nucleic acid-binding proteins"/>
    <property type="match status" value="1"/>
</dbReference>
<dbReference type="Gene3D" id="4.10.950.10">
    <property type="entry name" value="Ribosomal protein L2, domain 3"/>
    <property type="match status" value="1"/>
</dbReference>
<dbReference type="HAMAP" id="MF_01320_B">
    <property type="entry name" value="Ribosomal_uL2_B"/>
    <property type="match status" value="1"/>
</dbReference>
<dbReference type="InterPro" id="IPR012340">
    <property type="entry name" value="NA-bd_OB-fold"/>
</dbReference>
<dbReference type="InterPro" id="IPR014722">
    <property type="entry name" value="Rib_uL2_dom2"/>
</dbReference>
<dbReference type="InterPro" id="IPR002171">
    <property type="entry name" value="Ribosomal_uL2"/>
</dbReference>
<dbReference type="InterPro" id="IPR005880">
    <property type="entry name" value="Ribosomal_uL2_bac/org-type"/>
</dbReference>
<dbReference type="InterPro" id="IPR022669">
    <property type="entry name" value="Ribosomal_uL2_C"/>
</dbReference>
<dbReference type="InterPro" id="IPR022671">
    <property type="entry name" value="Ribosomal_uL2_CS"/>
</dbReference>
<dbReference type="InterPro" id="IPR014726">
    <property type="entry name" value="Ribosomal_uL2_dom3"/>
</dbReference>
<dbReference type="InterPro" id="IPR022666">
    <property type="entry name" value="Ribosomal_uL2_RNA-bd_dom"/>
</dbReference>
<dbReference type="InterPro" id="IPR008991">
    <property type="entry name" value="Translation_prot_SH3-like_sf"/>
</dbReference>
<dbReference type="NCBIfam" id="TIGR01171">
    <property type="entry name" value="rplB_bact"/>
    <property type="match status" value="1"/>
</dbReference>
<dbReference type="PANTHER" id="PTHR13691:SF5">
    <property type="entry name" value="LARGE RIBOSOMAL SUBUNIT PROTEIN UL2M"/>
    <property type="match status" value="1"/>
</dbReference>
<dbReference type="PANTHER" id="PTHR13691">
    <property type="entry name" value="RIBOSOMAL PROTEIN L2"/>
    <property type="match status" value="1"/>
</dbReference>
<dbReference type="Pfam" id="PF00181">
    <property type="entry name" value="Ribosomal_L2"/>
    <property type="match status" value="1"/>
</dbReference>
<dbReference type="Pfam" id="PF03947">
    <property type="entry name" value="Ribosomal_L2_C"/>
    <property type="match status" value="1"/>
</dbReference>
<dbReference type="PIRSF" id="PIRSF002158">
    <property type="entry name" value="Ribosomal_L2"/>
    <property type="match status" value="1"/>
</dbReference>
<dbReference type="SMART" id="SM01383">
    <property type="entry name" value="Ribosomal_L2"/>
    <property type="match status" value="1"/>
</dbReference>
<dbReference type="SMART" id="SM01382">
    <property type="entry name" value="Ribosomal_L2_C"/>
    <property type="match status" value="1"/>
</dbReference>
<dbReference type="SUPFAM" id="SSF50249">
    <property type="entry name" value="Nucleic acid-binding proteins"/>
    <property type="match status" value="1"/>
</dbReference>
<dbReference type="SUPFAM" id="SSF50104">
    <property type="entry name" value="Translation proteins SH3-like domain"/>
    <property type="match status" value="1"/>
</dbReference>
<dbReference type="PROSITE" id="PS00467">
    <property type="entry name" value="RIBOSOMAL_L2"/>
    <property type="match status" value="1"/>
</dbReference>
<evidence type="ECO:0000255" key="1">
    <source>
        <dbReference type="HAMAP-Rule" id="MF_01320"/>
    </source>
</evidence>
<evidence type="ECO:0000256" key="2">
    <source>
        <dbReference type="SAM" id="MobiDB-lite"/>
    </source>
</evidence>
<evidence type="ECO:0000305" key="3"/>
<organism>
    <name type="scientific">Geobacillus sp. (strain WCH70)</name>
    <dbReference type="NCBI Taxonomy" id="471223"/>
    <lineage>
        <taxon>Bacteria</taxon>
        <taxon>Bacillati</taxon>
        <taxon>Bacillota</taxon>
        <taxon>Bacilli</taxon>
        <taxon>Bacillales</taxon>
        <taxon>Anoxybacillaceae</taxon>
        <taxon>Geobacillus</taxon>
    </lineage>
</organism>
<sequence length="276" mass="30287">MAIKKYKPTSNGRRGMTVLDFSEITTDQPEKSLLAPLKKKAGRNNQGKITVRHQGGGHKRQYRIIDFKRDKDGIPGRVATIEYDPNRSANIALIHYADGEKRYIIAPKNLKVGMEIMSGPDADIKVGNALPLENIPVGTFVHNIELKPGRGGQLVRAAGTSAQVLGKEGKYVIVRLASGEVRMILGACRATVGEVGNEQHELVKIGKAGRARWLGIRPTVRGSVMNPVDHPHGGGEGKAPIGRKSPMTPWGKPTLGFKTRKKKNKSDKFIIRRRKK</sequence>
<protein>
    <recommendedName>
        <fullName evidence="1">Large ribosomal subunit protein uL2</fullName>
    </recommendedName>
    <alternativeName>
        <fullName evidence="3">50S ribosomal protein L2</fullName>
    </alternativeName>
</protein>
<name>RL2_GEOSW</name>
<reference key="1">
    <citation type="submission" date="2009-06" db="EMBL/GenBank/DDBJ databases">
        <title>Complete sequence of chromosome of Geopacillus sp. WCH70.</title>
        <authorList>
            <consortium name="US DOE Joint Genome Institute"/>
            <person name="Lucas S."/>
            <person name="Copeland A."/>
            <person name="Lapidus A."/>
            <person name="Glavina del Rio T."/>
            <person name="Dalin E."/>
            <person name="Tice H."/>
            <person name="Bruce D."/>
            <person name="Goodwin L."/>
            <person name="Pitluck S."/>
            <person name="Chertkov O."/>
            <person name="Brettin T."/>
            <person name="Detter J.C."/>
            <person name="Han C."/>
            <person name="Larimer F."/>
            <person name="Land M."/>
            <person name="Hauser L."/>
            <person name="Kyrpides N."/>
            <person name="Mikhailova N."/>
            <person name="Brumm P."/>
            <person name="Mead D.A."/>
            <person name="Richardson P."/>
        </authorList>
    </citation>
    <scope>NUCLEOTIDE SEQUENCE [LARGE SCALE GENOMIC DNA]</scope>
    <source>
        <strain>WCH70</strain>
    </source>
</reference>
<feature type="chain" id="PRO_1000214449" description="Large ribosomal subunit protein uL2">
    <location>
        <begin position="1"/>
        <end position="276"/>
    </location>
</feature>
<feature type="region of interest" description="Disordered" evidence="2">
    <location>
        <begin position="224"/>
        <end position="276"/>
    </location>
</feature>
<feature type="compositionally biased region" description="Basic residues" evidence="2">
    <location>
        <begin position="258"/>
        <end position="276"/>
    </location>
</feature>
<gene>
    <name evidence="1" type="primary">rplB</name>
    <name type="ordered locus">GWCH70_0114</name>
</gene>